<proteinExistence type="predicted"/>
<feature type="chain" id="PRO_0000065261" description="Uncharacterized protein D1044.4">
    <location>
        <begin position="1"/>
        <end position="103"/>
    </location>
</feature>
<protein>
    <recommendedName>
        <fullName>Uncharacterized protein D1044.4</fullName>
    </recommendedName>
</protein>
<gene>
    <name type="ORF">D1044.4</name>
</gene>
<name>YLK4_CAEEL</name>
<dbReference type="EMBL" id="FO081000">
    <property type="protein sequence ID" value="CCD68372.1"/>
    <property type="molecule type" value="Genomic_DNA"/>
</dbReference>
<dbReference type="PIR" id="T15882">
    <property type="entry name" value="T15882"/>
</dbReference>
<dbReference type="RefSeq" id="NP_498179.1">
    <property type="nucleotide sequence ID" value="NM_065778.1"/>
</dbReference>
<dbReference type="STRING" id="6239.D1044.4.1"/>
<dbReference type="PaxDb" id="6239-D1044.4"/>
<dbReference type="EnsemblMetazoa" id="D1044.4.1">
    <property type="protein sequence ID" value="D1044.4.1"/>
    <property type="gene ID" value="WBGene00017029"/>
</dbReference>
<dbReference type="GeneID" id="183906"/>
<dbReference type="KEGG" id="cel:CELE_D1044.4"/>
<dbReference type="UCSC" id="D1044.4">
    <property type="organism name" value="c. elegans"/>
</dbReference>
<dbReference type="AGR" id="WB:WBGene00017029"/>
<dbReference type="CTD" id="183906"/>
<dbReference type="WormBase" id="D1044.4">
    <property type="protein sequence ID" value="CE01207"/>
    <property type="gene ID" value="WBGene00017029"/>
</dbReference>
<dbReference type="HOGENOM" id="CLU_2266138_0_0_1"/>
<dbReference type="InParanoid" id="P41952"/>
<dbReference type="PRO" id="PR:P41952"/>
<dbReference type="Proteomes" id="UP000001940">
    <property type="component" value="Chromosome III"/>
</dbReference>
<organism>
    <name type="scientific">Caenorhabditis elegans</name>
    <dbReference type="NCBI Taxonomy" id="6239"/>
    <lineage>
        <taxon>Eukaryota</taxon>
        <taxon>Metazoa</taxon>
        <taxon>Ecdysozoa</taxon>
        <taxon>Nematoda</taxon>
        <taxon>Chromadorea</taxon>
        <taxon>Rhabditida</taxon>
        <taxon>Rhabditina</taxon>
        <taxon>Rhabditomorpha</taxon>
        <taxon>Rhabditoidea</taxon>
        <taxon>Rhabditidae</taxon>
        <taxon>Peloderinae</taxon>
        <taxon>Caenorhabditis</taxon>
    </lineage>
</organism>
<accession>P41952</accession>
<keyword id="KW-1185">Reference proteome</keyword>
<sequence length="103" mass="12176">MQQNIRIQKNQYDTATHPTASSTTWKYVTYDETSETFGMSEQVADPCNHCPKPRNYNSECKDEDVEKHFEKVMPCVHTYTIIYGNVHHLPNHPIIRNLRHNHY</sequence>
<reference key="1">
    <citation type="journal article" date="1998" name="Science">
        <title>Genome sequence of the nematode C. elegans: a platform for investigating biology.</title>
        <authorList>
            <consortium name="The C. elegans sequencing consortium"/>
        </authorList>
    </citation>
    <scope>NUCLEOTIDE SEQUENCE [LARGE SCALE GENOMIC DNA]</scope>
    <source>
        <strain>Bristol N2</strain>
    </source>
</reference>